<name>ASPP_AEDAE</name>
<proteinExistence type="evidence at protein level"/>
<sequence>MLIKSIIALVCLAVLAQADFVRVQLHKTESARQHFRNVDTEIKQLRLKYNAVSGPVPEPLSNYLDAQYYGAITIGTPPQSFKVVFDTGSSNLWVPSKECSFTNIACLMHNKYNAKKSSTFEKNGTAFHIQYGSGSLSGYLSTDTVGLGGVSVTKQTFAEAINEPGLVFVAAKFDGILGLGYSSISVDGVVPVFYNMFNQGLIDAPVFSFYLNRDPSAAEGGEIIFGGSDSNKYTGDFTYLSVDRKAYWQFKMDSVKVGDTEFCNNGCEAIADTGTSLIAGPVSEVTAINKAIGGTPIMNGEYMVDCSLIPKLPKISFVLGGKSFDLEGADYVLRVAQMGKTICLSGFMGIDIPPPNGPLWILGDVFIGKYYTEFDMGNDRVGFATAV</sequence>
<keyword id="KW-0064">Aspartyl protease</keyword>
<keyword id="KW-0903">Direct protein sequencing</keyword>
<keyword id="KW-1015">Disulfide bond</keyword>
<keyword id="KW-0325">Glycoprotein</keyword>
<keyword id="KW-0378">Hydrolase</keyword>
<keyword id="KW-0458">Lysosome</keyword>
<keyword id="KW-0645">Protease</keyword>
<keyword id="KW-1185">Reference proteome</keyword>
<keyword id="KW-0732">Signal</keyword>
<keyword id="KW-0865">Zymogen</keyword>
<accession>Q03168</accession>
<accession>Q177E0</accession>
<evidence type="ECO:0000250" key="1"/>
<evidence type="ECO:0000255" key="2"/>
<evidence type="ECO:0000255" key="3">
    <source>
        <dbReference type="PROSITE-ProRule" id="PRU01103"/>
    </source>
</evidence>
<evidence type="ECO:0000255" key="4">
    <source>
        <dbReference type="PROSITE-ProRule" id="PRU10094"/>
    </source>
</evidence>
<evidence type="ECO:0000269" key="5">
    <source>
    </source>
</evidence>
<evidence type="ECO:0000269" key="6">
    <source ref="3"/>
</evidence>
<evidence type="ECO:0000305" key="7"/>
<comment type="function">
    <text evidence="6">May degrade organelles involved in the biosynthesis and secretion of vitellogenin.</text>
</comment>
<comment type="subunit">
    <text>Homodimer.</text>
</comment>
<comment type="subcellular location">
    <subcellularLocation>
        <location evidence="6">Lysosome</location>
    </subcellularLocation>
</comment>
<comment type="similarity">
    <text evidence="7">Belongs to the peptidase A1 family.</text>
</comment>
<organism>
    <name type="scientific">Aedes aegypti</name>
    <name type="common">Yellowfever mosquito</name>
    <name type="synonym">Culex aegypti</name>
    <dbReference type="NCBI Taxonomy" id="7159"/>
    <lineage>
        <taxon>Eukaryota</taxon>
        <taxon>Metazoa</taxon>
        <taxon>Ecdysozoa</taxon>
        <taxon>Arthropoda</taxon>
        <taxon>Hexapoda</taxon>
        <taxon>Insecta</taxon>
        <taxon>Pterygota</taxon>
        <taxon>Neoptera</taxon>
        <taxon>Endopterygota</taxon>
        <taxon>Diptera</taxon>
        <taxon>Nematocera</taxon>
        <taxon>Culicoidea</taxon>
        <taxon>Culicidae</taxon>
        <taxon>Culicinae</taxon>
        <taxon>Aedini</taxon>
        <taxon>Aedes</taxon>
        <taxon>Stegomyia</taxon>
    </lineage>
</organism>
<reference key="1">
    <citation type="journal article" date="1992" name="J. Biol. Chem.">
        <title>Cloning of cDNA for mosquito lysosomal aspartic protease. Sequence analysis of an insect lysosomal enzyme similar to cathepsins D and E.</title>
        <authorList>
            <person name="Cho W.L."/>
            <person name="Raikhel A.S."/>
        </authorList>
    </citation>
    <scope>NUCLEOTIDE SEQUENCE [MRNA]</scope>
    <scope>PROTEIN SEQUENCE OF 54-71</scope>
</reference>
<reference key="2">
    <citation type="journal article" date="2007" name="Science">
        <title>Genome sequence of Aedes aegypti, a major arbovirus vector.</title>
        <authorList>
            <person name="Nene V."/>
            <person name="Wortman J.R."/>
            <person name="Lawson D."/>
            <person name="Haas B.J."/>
            <person name="Kodira C.D."/>
            <person name="Tu Z.J."/>
            <person name="Loftus B.J."/>
            <person name="Xi Z."/>
            <person name="Megy K."/>
            <person name="Grabherr M."/>
            <person name="Ren Q."/>
            <person name="Zdobnov E.M."/>
            <person name="Lobo N.F."/>
            <person name="Campbell K.S."/>
            <person name="Brown S.E."/>
            <person name="Bonaldo M.F."/>
            <person name="Zhu J."/>
            <person name="Sinkins S.P."/>
            <person name="Hogenkamp D.G."/>
            <person name="Amedeo P."/>
            <person name="Arensburger P."/>
            <person name="Atkinson P.W."/>
            <person name="Bidwell S.L."/>
            <person name="Biedler J."/>
            <person name="Birney E."/>
            <person name="Bruggner R.V."/>
            <person name="Costas J."/>
            <person name="Coy M.R."/>
            <person name="Crabtree J."/>
            <person name="Crawford M."/>
            <person name="DeBruyn B."/>
            <person name="DeCaprio D."/>
            <person name="Eiglmeier K."/>
            <person name="Eisenstadt E."/>
            <person name="El-Dorry H."/>
            <person name="Gelbart W.M."/>
            <person name="Gomes S.L."/>
            <person name="Hammond M."/>
            <person name="Hannick L.I."/>
            <person name="Hogan J.R."/>
            <person name="Holmes M.H."/>
            <person name="Jaffe D."/>
            <person name="Johnston S.J."/>
            <person name="Kennedy R.C."/>
            <person name="Koo H."/>
            <person name="Kravitz S."/>
            <person name="Kriventseva E.V."/>
            <person name="Kulp D."/>
            <person name="Labutti K."/>
            <person name="Lee E."/>
            <person name="Li S."/>
            <person name="Lovin D.D."/>
            <person name="Mao C."/>
            <person name="Mauceli E."/>
            <person name="Menck C.F."/>
            <person name="Miller J.R."/>
            <person name="Montgomery P."/>
            <person name="Mori A."/>
            <person name="Nascimento A.L."/>
            <person name="Naveira H.F."/>
            <person name="Nusbaum C."/>
            <person name="O'Leary S.B."/>
            <person name="Orvis J."/>
            <person name="Pertea M."/>
            <person name="Quesneville H."/>
            <person name="Reidenbach K.R."/>
            <person name="Rogers Y.-H.C."/>
            <person name="Roth C.W."/>
            <person name="Schneider J.R."/>
            <person name="Schatz M."/>
            <person name="Shumway M."/>
            <person name="Stanke M."/>
            <person name="Stinson E.O."/>
            <person name="Tubio J.M.C."/>
            <person name="Vanzee J.P."/>
            <person name="Verjovski-Almeida S."/>
            <person name="Werner D."/>
            <person name="White O.R."/>
            <person name="Wyder S."/>
            <person name="Zeng Q."/>
            <person name="Zhao Q."/>
            <person name="Zhao Y."/>
            <person name="Hill C.A."/>
            <person name="Raikhel A.S."/>
            <person name="Soares M.B."/>
            <person name="Knudson D.L."/>
            <person name="Lee N.H."/>
            <person name="Galagan J."/>
            <person name="Salzberg S.L."/>
            <person name="Paulsen I.T."/>
            <person name="Dimopoulos G."/>
            <person name="Collins F.H."/>
            <person name="Bruce B."/>
            <person name="Fraser-Liggett C.M."/>
            <person name="Severson D.W."/>
        </authorList>
    </citation>
    <scope>NUCLEOTIDE SEQUENCE [LARGE SCALE GENOMIC DNA]</scope>
    <source>
        <strain>LVPib12</strain>
    </source>
</reference>
<reference key="3">
    <citation type="journal article" date="1991" name="Insect Biochem.">
        <title>Purification and characterization of a lysosomal aspartic protease with cathepsin D activity from the mosquito.</title>
        <authorList>
            <person name="Cho W.-L."/>
            <person name="Dhadialla T.S."/>
            <person name="Raikhel A.S."/>
        </authorList>
    </citation>
    <scope>FUNCTION</scope>
    <scope>SUBCELLULAR LOCATION</scope>
</reference>
<gene>
    <name type="ORF">AAEL006169</name>
</gene>
<protein>
    <recommendedName>
        <fullName>Lysosomal aspartic protease</fullName>
        <ecNumber>3.4.23.-</ecNumber>
    </recommendedName>
</protein>
<dbReference type="EC" id="3.4.23.-"/>
<dbReference type="EMBL" id="M95187">
    <property type="protein sequence ID" value="AAA29350.1"/>
    <property type="molecule type" value="mRNA"/>
</dbReference>
<dbReference type="EMBL" id="CH477377">
    <property type="protein sequence ID" value="EAT42285.1"/>
    <property type="molecule type" value="Genomic_DNA"/>
</dbReference>
<dbReference type="PIR" id="A45117">
    <property type="entry name" value="A45117"/>
</dbReference>
<dbReference type="RefSeq" id="XP_001657556.1">
    <property type="nucleotide sequence ID" value="XM_001657506.1"/>
</dbReference>
<dbReference type="SMR" id="Q03168"/>
<dbReference type="FunCoup" id="Q03168">
    <property type="interactions" value="1011"/>
</dbReference>
<dbReference type="STRING" id="7159.Q03168"/>
<dbReference type="Allergome" id="11917">
    <property type="allergen name" value="Aed a 11"/>
</dbReference>
<dbReference type="Allergome" id="11918">
    <property type="allergen name" value="Aed a 11.0101"/>
</dbReference>
<dbReference type="MEROPS" id="A01.009"/>
<dbReference type="PaxDb" id="7159-AAEL006169-PA"/>
<dbReference type="GeneID" id="5567565"/>
<dbReference type="KEGG" id="aag:5567565"/>
<dbReference type="VEuPathDB" id="VectorBase:AAEL006169"/>
<dbReference type="eggNOG" id="KOG1339">
    <property type="taxonomic scope" value="Eukaryota"/>
</dbReference>
<dbReference type="HOGENOM" id="CLU_013253_3_3_1"/>
<dbReference type="InParanoid" id="Q03168"/>
<dbReference type="OMA" id="KGEYMIS"/>
<dbReference type="OrthoDB" id="771136at2759"/>
<dbReference type="PhylomeDB" id="Q03168"/>
<dbReference type="Proteomes" id="UP000008820">
    <property type="component" value="Unassembled WGS sequence"/>
</dbReference>
<dbReference type="Proteomes" id="UP000682892">
    <property type="component" value="Chromosome 1"/>
</dbReference>
<dbReference type="GO" id="GO:0005764">
    <property type="term" value="C:lysosome"/>
    <property type="evidence" value="ECO:0007669"/>
    <property type="project" value="UniProtKB-SubCell"/>
</dbReference>
<dbReference type="GO" id="GO:0004190">
    <property type="term" value="F:aspartic-type endopeptidase activity"/>
    <property type="evidence" value="ECO:0007669"/>
    <property type="project" value="UniProtKB-KW"/>
</dbReference>
<dbReference type="GO" id="GO:0006508">
    <property type="term" value="P:proteolysis"/>
    <property type="evidence" value="ECO:0007669"/>
    <property type="project" value="UniProtKB-KW"/>
</dbReference>
<dbReference type="CDD" id="cd05485">
    <property type="entry name" value="Cathepsin_D_like"/>
    <property type="match status" value="1"/>
</dbReference>
<dbReference type="FunFam" id="2.40.70.10:FF:000009">
    <property type="entry name" value="Aspartic proteinase A1"/>
    <property type="match status" value="1"/>
</dbReference>
<dbReference type="FunFam" id="2.40.70.10:FF:000044">
    <property type="entry name" value="Lysosomal aspartic protease"/>
    <property type="match status" value="1"/>
</dbReference>
<dbReference type="Gene3D" id="2.40.70.10">
    <property type="entry name" value="Acid Proteases"/>
    <property type="match status" value="2"/>
</dbReference>
<dbReference type="InterPro" id="IPR001461">
    <property type="entry name" value="Aspartic_peptidase_A1"/>
</dbReference>
<dbReference type="InterPro" id="IPR001969">
    <property type="entry name" value="Aspartic_peptidase_AS"/>
</dbReference>
<dbReference type="InterPro" id="IPR012848">
    <property type="entry name" value="Aspartic_peptidase_N"/>
</dbReference>
<dbReference type="InterPro" id="IPR034129">
    <property type="entry name" value="Cathepsin_D-like"/>
</dbReference>
<dbReference type="InterPro" id="IPR033121">
    <property type="entry name" value="PEPTIDASE_A1"/>
</dbReference>
<dbReference type="InterPro" id="IPR021109">
    <property type="entry name" value="Peptidase_aspartic_dom_sf"/>
</dbReference>
<dbReference type="PANTHER" id="PTHR47966">
    <property type="entry name" value="BETA-SITE APP-CLEAVING ENZYME, ISOFORM A-RELATED"/>
    <property type="match status" value="1"/>
</dbReference>
<dbReference type="PANTHER" id="PTHR47966:SF51">
    <property type="entry name" value="BETA-SITE APP-CLEAVING ENZYME, ISOFORM A-RELATED"/>
    <property type="match status" value="1"/>
</dbReference>
<dbReference type="Pfam" id="PF07966">
    <property type="entry name" value="A1_Propeptide"/>
    <property type="match status" value="1"/>
</dbReference>
<dbReference type="Pfam" id="PF00026">
    <property type="entry name" value="Asp"/>
    <property type="match status" value="1"/>
</dbReference>
<dbReference type="PRINTS" id="PR00792">
    <property type="entry name" value="PEPSIN"/>
</dbReference>
<dbReference type="SUPFAM" id="SSF50630">
    <property type="entry name" value="Acid proteases"/>
    <property type="match status" value="1"/>
</dbReference>
<dbReference type="PROSITE" id="PS00141">
    <property type="entry name" value="ASP_PROTEASE"/>
    <property type="match status" value="2"/>
</dbReference>
<dbReference type="PROSITE" id="PS51767">
    <property type="entry name" value="PEPTIDASE_A1"/>
    <property type="match status" value="1"/>
</dbReference>
<feature type="signal peptide">
    <location>
        <begin position="1"/>
        <end position="18"/>
    </location>
</feature>
<feature type="propeptide" id="PRO_0000025933" description="Removed in mature form" evidence="5">
    <location>
        <begin position="19"/>
        <end position="53"/>
    </location>
</feature>
<feature type="chain" id="PRO_0000025934" description="Lysosomal aspartic protease">
    <location>
        <begin position="54"/>
        <end position="387"/>
    </location>
</feature>
<feature type="domain" description="Peptidase A1" evidence="3">
    <location>
        <begin position="68"/>
        <end position="384"/>
    </location>
</feature>
<feature type="active site" evidence="4">
    <location>
        <position position="86"/>
    </location>
</feature>
<feature type="active site" evidence="4">
    <location>
        <position position="272"/>
    </location>
</feature>
<feature type="glycosylation site" description="N-linked (GlcNAc...) asparagine" evidence="2">
    <location>
        <position position="123"/>
    </location>
</feature>
<feature type="disulfide bond" evidence="1">
    <location>
        <begin position="99"/>
        <end position="106"/>
    </location>
</feature>
<feature type="disulfide bond" evidence="1">
    <location>
        <begin position="263"/>
        <end position="267"/>
    </location>
</feature>
<feature type="disulfide bond" evidence="1">
    <location>
        <begin position="306"/>
        <end position="343"/>
    </location>
</feature>
<feature type="sequence conflict" description="In Ref. 1; AAA29350." evidence="7" ref="1">
    <original>A</original>
    <variation>S</variation>
    <location>
        <position position="16"/>
    </location>
</feature>